<reference key="1">
    <citation type="journal article" date="2006" name="Proc. Natl. Acad. Sci. U.S.A.">
        <title>Comparative genomics of the lactic acid bacteria.</title>
        <authorList>
            <person name="Makarova K.S."/>
            <person name="Slesarev A."/>
            <person name="Wolf Y.I."/>
            <person name="Sorokin A."/>
            <person name="Mirkin B."/>
            <person name="Koonin E.V."/>
            <person name="Pavlov A."/>
            <person name="Pavlova N."/>
            <person name="Karamychev V."/>
            <person name="Polouchine N."/>
            <person name="Shakhova V."/>
            <person name="Grigoriev I."/>
            <person name="Lou Y."/>
            <person name="Rohksar D."/>
            <person name="Lucas S."/>
            <person name="Huang K."/>
            <person name="Goodstein D.M."/>
            <person name="Hawkins T."/>
            <person name="Plengvidhya V."/>
            <person name="Welker D."/>
            <person name="Hughes J."/>
            <person name="Goh Y."/>
            <person name="Benson A."/>
            <person name="Baldwin K."/>
            <person name="Lee J.-H."/>
            <person name="Diaz-Muniz I."/>
            <person name="Dosti B."/>
            <person name="Smeianov V."/>
            <person name="Wechter W."/>
            <person name="Barabote R."/>
            <person name="Lorca G."/>
            <person name="Altermann E."/>
            <person name="Barrangou R."/>
            <person name="Ganesan B."/>
            <person name="Xie Y."/>
            <person name="Rawsthorne H."/>
            <person name="Tamir D."/>
            <person name="Parker C."/>
            <person name="Breidt F."/>
            <person name="Broadbent J.R."/>
            <person name="Hutkins R."/>
            <person name="O'Sullivan D."/>
            <person name="Steele J."/>
            <person name="Unlu G."/>
            <person name="Saier M.H. Jr."/>
            <person name="Klaenhammer T."/>
            <person name="Richardson P."/>
            <person name="Kozyavkin S."/>
            <person name="Weimer B.C."/>
            <person name="Mills D.A."/>
        </authorList>
    </citation>
    <scope>NUCLEOTIDE SEQUENCE [LARGE SCALE GENOMIC DNA]</scope>
    <source>
        <strain>ATCC BAA-365 / Lb-18</strain>
    </source>
</reference>
<proteinExistence type="inferred from homology"/>
<name>RL332_LACDB</name>
<keyword id="KW-0687">Ribonucleoprotein</keyword>
<keyword id="KW-0689">Ribosomal protein</keyword>
<protein>
    <recommendedName>
        <fullName evidence="1">Large ribosomal subunit protein bL33B</fullName>
    </recommendedName>
    <alternativeName>
        <fullName evidence="1">50S ribosomal protein L33 2</fullName>
    </alternativeName>
</protein>
<accession>Q048T5</accession>
<feature type="chain" id="PRO_0000356500" description="Large ribosomal subunit protein bL33B">
    <location>
        <begin position="1"/>
        <end position="49"/>
    </location>
</feature>
<comment type="similarity">
    <text evidence="1">Belongs to the bacterial ribosomal protein bL33 family.</text>
</comment>
<comment type="sequence caution" evidence="2">
    <conflict type="erroneous initiation">
        <sequence resource="EMBL-CDS" id="ABJ59037"/>
    </conflict>
    <text>Extended N-terminus.</text>
</comment>
<gene>
    <name evidence="1" type="primary">rpmG2</name>
    <name type="ordered locus">LBUL_1547</name>
</gene>
<evidence type="ECO:0000255" key="1">
    <source>
        <dbReference type="HAMAP-Rule" id="MF_00294"/>
    </source>
</evidence>
<evidence type="ECO:0000305" key="2"/>
<dbReference type="EMBL" id="CP000412">
    <property type="protein sequence ID" value="ABJ59037.1"/>
    <property type="status" value="ALT_INIT"/>
    <property type="molecule type" value="Genomic_DNA"/>
</dbReference>
<dbReference type="SMR" id="Q048T5"/>
<dbReference type="KEGG" id="lbu:LBUL_1547"/>
<dbReference type="HOGENOM" id="CLU_190949_0_1_9"/>
<dbReference type="BioCyc" id="LDEL321956:LBUL_RS07285-MONOMER"/>
<dbReference type="GO" id="GO:0005737">
    <property type="term" value="C:cytoplasm"/>
    <property type="evidence" value="ECO:0007669"/>
    <property type="project" value="UniProtKB-ARBA"/>
</dbReference>
<dbReference type="GO" id="GO:1990904">
    <property type="term" value="C:ribonucleoprotein complex"/>
    <property type="evidence" value="ECO:0007669"/>
    <property type="project" value="UniProtKB-KW"/>
</dbReference>
<dbReference type="GO" id="GO:0005840">
    <property type="term" value="C:ribosome"/>
    <property type="evidence" value="ECO:0007669"/>
    <property type="project" value="UniProtKB-KW"/>
</dbReference>
<dbReference type="GO" id="GO:0003735">
    <property type="term" value="F:structural constituent of ribosome"/>
    <property type="evidence" value="ECO:0007669"/>
    <property type="project" value="InterPro"/>
</dbReference>
<dbReference type="GO" id="GO:0006412">
    <property type="term" value="P:translation"/>
    <property type="evidence" value="ECO:0007669"/>
    <property type="project" value="UniProtKB-UniRule"/>
</dbReference>
<dbReference type="Gene3D" id="2.20.28.120">
    <property type="entry name" value="Ribosomal protein L33"/>
    <property type="match status" value="1"/>
</dbReference>
<dbReference type="HAMAP" id="MF_00294">
    <property type="entry name" value="Ribosomal_bL33"/>
    <property type="match status" value="1"/>
</dbReference>
<dbReference type="InterPro" id="IPR001705">
    <property type="entry name" value="Ribosomal_bL33"/>
</dbReference>
<dbReference type="InterPro" id="IPR038584">
    <property type="entry name" value="Ribosomal_bL33_sf"/>
</dbReference>
<dbReference type="InterPro" id="IPR011332">
    <property type="entry name" value="Ribosomal_zn-bd"/>
</dbReference>
<dbReference type="NCBIfam" id="NF001764">
    <property type="entry name" value="PRK00504.1"/>
    <property type="match status" value="1"/>
</dbReference>
<dbReference type="NCBIfam" id="TIGR01023">
    <property type="entry name" value="rpmG_bact"/>
    <property type="match status" value="1"/>
</dbReference>
<dbReference type="Pfam" id="PF00471">
    <property type="entry name" value="Ribosomal_L33"/>
    <property type="match status" value="1"/>
</dbReference>
<dbReference type="SUPFAM" id="SSF57829">
    <property type="entry name" value="Zn-binding ribosomal proteins"/>
    <property type="match status" value="1"/>
</dbReference>
<sequence length="49" mass="5497">MAVKKAALACSVCGSRNYSITANSNRTKRLELNKFCKHCGKKTLHKETR</sequence>
<organism>
    <name type="scientific">Lactobacillus delbrueckii subsp. bulgaricus (strain ATCC BAA-365 / Lb-18)</name>
    <dbReference type="NCBI Taxonomy" id="321956"/>
    <lineage>
        <taxon>Bacteria</taxon>
        <taxon>Bacillati</taxon>
        <taxon>Bacillota</taxon>
        <taxon>Bacilli</taxon>
        <taxon>Lactobacillales</taxon>
        <taxon>Lactobacillaceae</taxon>
        <taxon>Lactobacillus</taxon>
    </lineage>
</organism>